<feature type="chain" id="PRO_0000379328" description="ATP-dependent helicase/nuclease subunit A">
    <location>
        <begin position="1"/>
        <end position="1207"/>
    </location>
</feature>
<feature type="domain" description="UvrD-like helicase ATP-binding" evidence="1">
    <location>
        <begin position="26"/>
        <end position="482"/>
    </location>
</feature>
<feature type="domain" description="UvrD-like helicase C-terminal" evidence="1">
    <location>
        <begin position="508"/>
        <end position="794"/>
    </location>
</feature>
<feature type="binding site" evidence="1">
    <location>
        <begin position="47"/>
        <end position="54"/>
    </location>
    <ligand>
        <name>ATP</name>
        <dbReference type="ChEBI" id="CHEBI:30616"/>
    </ligand>
</feature>
<reference key="1">
    <citation type="journal article" date="2002" name="Proc. Natl. Acad. Sci. U.S.A.">
        <title>Complete genome sequence and comparative genomic analysis of an emerging human pathogen, serotype V Streptococcus agalactiae.</title>
        <authorList>
            <person name="Tettelin H."/>
            <person name="Masignani V."/>
            <person name="Cieslewicz M.J."/>
            <person name="Eisen J.A."/>
            <person name="Peterson S.N."/>
            <person name="Wessels M.R."/>
            <person name="Paulsen I.T."/>
            <person name="Nelson K.E."/>
            <person name="Margarit I."/>
            <person name="Read T.D."/>
            <person name="Madoff L.C."/>
            <person name="Wolf A.M."/>
            <person name="Beanan M.J."/>
            <person name="Brinkac L.M."/>
            <person name="Daugherty S.C."/>
            <person name="DeBoy R.T."/>
            <person name="Durkin A.S."/>
            <person name="Kolonay J.F."/>
            <person name="Madupu R."/>
            <person name="Lewis M.R."/>
            <person name="Radune D."/>
            <person name="Fedorova N.B."/>
            <person name="Scanlan D."/>
            <person name="Khouri H.M."/>
            <person name="Mulligan S."/>
            <person name="Carty H.A."/>
            <person name="Cline R.T."/>
            <person name="Van Aken S.E."/>
            <person name="Gill J."/>
            <person name="Scarselli M."/>
            <person name="Mora M."/>
            <person name="Iacobini E.T."/>
            <person name="Brettoni C."/>
            <person name="Galli G."/>
            <person name="Mariani M."/>
            <person name="Vegni F."/>
            <person name="Maione D."/>
            <person name="Rinaudo D."/>
            <person name="Rappuoli R."/>
            <person name="Telford J.L."/>
            <person name="Kasper D.L."/>
            <person name="Grandi G."/>
            <person name="Fraser C.M."/>
        </authorList>
    </citation>
    <scope>NUCLEOTIDE SEQUENCE [LARGE SCALE GENOMIC DNA]</scope>
    <source>
        <strain>ATCC BAA-611 / 2603 V/R</strain>
    </source>
</reference>
<name>ADDA_STRA5</name>
<organism>
    <name type="scientific">Streptococcus agalactiae serotype V (strain ATCC BAA-611 / 2603 V/R)</name>
    <dbReference type="NCBI Taxonomy" id="208435"/>
    <lineage>
        <taxon>Bacteria</taxon>
        <taxon>Bacillati</taxon>
        <taxon>Bacillota</taxon>
        <taxon>Bacilli</taxon>
        <taxon>Lactobacillales</taxon>
        <taxon>Streptococcaceae</taxon>
        <taxon>Streptococcus</taxon>
    </lineage>
</organism>
<comment type="function">
    <text evidence="1">The heterodimer acts as both an ATP-dependent DNA helicase and an ATP-dependent, dual-direction single-stranded exonuclease. Recognizes the chi site generating a DNA molecule suitable for the initiation of homologous recombination. The AddA nuclease domain is required for chi fragment generation; this subunit has the helicase and 3' -&gt; 5' nuclease activities.</text>
</comment>
<comment type="catalytic activity">
    <reaction evidence="1">
        <text>Couples ATP hydrolysis with the unwinding of duplex DNA by translocating in the 3'-5' direction.</text>
        <dbReference type="EC" id="5.6.2.4"/>
    </reaction>
</comment>
<comment type="catalytic activity">
    <reaction evidence="1">
        <text>ATP + H2O = ADP + phosphate + H(+)</text>
        <dbReference type="Rhea" id="RHEA:13065"/>
        <dbReference type="ChEBI" id="CHEBI:15377"/>
        <dbReference type="ChEBI" id="CHEBI:15378"/>
        <dbReference type="ChEBI" id="CHEBI:30616"/>
        <dbReference type="ChEBI" id="CHEBI:43474"/>
        <dbReference type="ChEBI" id="CHEBI:456216"/>
        <dbReference type="EC" id="5.6.2.4"/>
    </reaction>
</comment>
<comment type="cofactor">
    <cofactor evidence="1">
        <name>Mg(2+)</name>
        <dbReference type="ChEBI" id="CHEBI:18420"/>
    </cofactor>
</comment>
<comment type="subunit">
    <text evidence="1">Heterodimer of AddA and AddB/RexB.</text>
</comment>
<comment type="similarity">
    <text evidence="1">Belongs to the helicase family. AddA subfamily.</text>
</comment>
<accession>Q8E061</accession>
<keyword id="KW-0067">ATP-binding</keyword>
<keyword id="KW-0227">DNA damage</keyword>
<keyword id="KW-0234">DNA repair</keyword>
<keyword id="KW-0238">DNA-binding</keyword>
<keyword id="KW-0269">Exonuclease</keyword>
<keyword id="KW-0347">Helicase</keyword>
<keyword id="KW-0378">Hydrolase</keyword>
<keyword id="KW-0413">Isomerase</keyword>
<keyword id="KW-0540">Nuclease</keyword>
<keyword id="KW-0547">Nucleotide-binding</keyword>
<keyword id="KW-1185">Reference proteome</keyword>
<sequence>MTFKPFLNPEDIAVIQTEEKNSDKKQKRTPEQIEAIYTFGNNVLVSASAGSGKTFVMVERILDKLLRGVPIDSLFISTFTVKAAGELKERLEKKINESLKSAESDDLKQFLTQQLVGIQTADIGTMDAFTQKIVNQYGYTLGISPIFRILQDKNEQDVIKNEVYADLFSDYMTGKNAASFIKLVKNFSGNRKDSKAFREMVYKVYAFSQSTDNPKRWMQTVFLKGAQTYTDFEAIPDQEVSSLLNVMQTTANQLRDLTDQEDYKQLTAKGVPTANYKKHLKIIENLVHWSQDFNLLYGKKGLTNLARDITNVIPSGNDVTVAGVKYPIFKQLHNRIVGLKHLEVIFKYQGESLFLLELLQSFVLDFSEQYLQEKIQENAFEFSDIAHFAIQILEENHDIRQLYQDKYHEVMVDEYQDNNHTQERMLELLSNGHNRFMVGDIKQSIYRFRQADPQIFNDKYKAYQDNPSQGKLIILKENFRSQSEVLDSTNSVFTHLMDEEVGDILYDESHQLKAGSPRQQERHPNNKTQVLLLDTDEDDIDDSDSQQYDISPAEAKLVAKEIIRLHKEENVPFQDITLLVSSRTRNDGILQTFDRYGIPLVTDGGEQNYLKSVEVMVMLDTLRSIDNPLNDYALVALLRSPMFGFNEDDLTRIAIQDVKMAFYHKVKLSYHKEGHHSDLITPELSSKIDHFMKTFQTWRDFAKWHSLYDLIWKIYNDRFYYDYVGALPKAEQRQANLYALALRANQFEKTGFKGLSRFIRMIDKVLENENDLADVEVALPQNAVNLMTIHKSKGLEFKYVFILNIDKKFSMVDITSPLILSRNQGIGIKYVADMRHELEEEILPAVKVSMETLPYQLNKRELRLATLSEQMRLLYVAMTRAEKKLYLVGKASQTKWADHYDLVSENNHLPLASRETFVTFQDWLLAVHETYKKQELFYDINFVSLEELTDHHIGMVNPSLPFNPDNKVENRQSEDIVRAISVLESVEQINQTYKAAIELPTVRTPSQVKKIYEPILDIEGVDVMETITKTSVDFKLPDFSTSKKQDPAALGSAVHELMQRIEMSSHVKMEDIQKALTEVNAETSVKAAIQIEKINYFFQETSLGKYIQEEVEHLHREAPFAMLKEDPESGEKFVVRGIIDGYLLLENRIILFDYKTDKFVNPLELKERYQGQMALYAEALKKSYEIEKIDKYLILLGGKQLEVVKMD</sequence>
<evidence type="ECO:0000255" key="1">
    <source>
        <dbReference type="HAMAP-Rule" id="MF_01451"/>
    </source>
</evidence>
<gene>
    <name evidence="1" type="primary">addA</name>
    <name type="synonym">rexA</name>
    <name type="ordered locus">SAG0874</name>
</gene>
<dbReference type="EC" id="3.1.-.-" evidence="1"/>
<dbReference type="EC" id="5.6.2.4" evidence="1"/>
<dbReference type="EMBL" id="AE009948">
    <property type="protein sequence ID" value="AAM99760.1"/>
    <property type="molecule type" value="Genomic_DNA"/>
</dbReference>
<dbReference type="RefSeq" id="NP_687888.1">
    <property type="nucleotide sequence ID" value="NC_004116.1"/>
</dbReference>
<dbReference type="RefSeq" id="WP_000143232.1">
    <property type="nucleotide sequence ID" value="NC_004116.1"/>
</dbReference>
<dbReference type="SMR" id="Q8E061"/>
<dbReference type="STRING" id="208435.SAG0874"/>
<dbReference type="KEGG" id="sag:SAG0874"/>
<dbReference type="PATRIC" id="fig|208435.3.peg.881"/>
<dbReference type="HOGENOM" id="CLU_001114_3_1_9"/>
<dbReference type="OrthoDB" id="9810135at2"/>
<dbReference type="Proteomes" id="UP000000821">
    <property type="component" value="Chromosome"/>
</dbReference>
<dbReference type="GO" id="GO:0005829">
    <property type="term" value="C:cytosol"/>
    <property type="evidence" value="ECO:0007669"/>
    <property type="project" value="TreeGrafter"/>
</dbReference>
<dbReference type="GO" id="GO:0033202">
    <property type="term" value="C:DNA helicase complex"/>
    <property type="evidence" value="ECO:0007669"/>
    <property type="project" value="TreeGrafter"/>
</dbReference>
<dbReference type="GO" id="GO:0043138">
    <property type="term" value="F:3'-5' DNA helicase activity"/>
    <property type="evidence" value="ECO:0007669"/>
    <property type="project" value="UniProtKB-UniRule"/>
</dbReference>
<dbReference type="GO" id="GO:0008408">
    <property type="term" value="F:3'-5' exonuclease activity"/>
    <property type="evidence" value="ECO:0007669"/>
    <property type="project" value="UniProtKB-UniRule"/>
</dbReference>
<dbReference type="GO" id="GO:0005524">
    <property type="term" value="F:ATP binding"/>
    <property type="evidence" value="ECO:0007669"/>
    <property type="project" value="UniProtKB-UniRule"/>
</dbReference>
<dbReference type="GO" id="GO:0016887">
    <property type="term" value="F:ATP hydrolysis activity"/>
    <property type="evidence" value="ECO:0007669"/>
    <property type="project" value="RHEA"/>
</dbReference>
<dbReference type="GO" id="GO:0003690">
    <property type="term" value="F:double-stranded DNA binding"/>
    <property type="evidence" value="ECO:0007669"/>
    <property type="project" value="UniProtKB-UniRule"/>
</dbReference>
<dbReference type="GO" id="GO:0000724">
    <property type="term" value="P:double-strand break repair via homologous recombination"/>
    <property type="evidence" value="ECO:0007669"/>
    <property type="project" value="UniProtKB-UniRule"/>
</dbReference>
<dbReference type="CDD" id="cd17932">
    <property type="entry name" value="DEXQc_UvrD"/>
    <property type="match status" value="1"/>
</dbReference>
<dbReference type="Gene3D" id="3.90.320.10">
    <property type="match status" value="1"/>
</dbReference>
<dbReference type="Gene3D" id="3.40.50.300">
    <property type="entry name" value="P-loop containing nucleotide triphosphate hydrolases"/>
    <property type="match status" value="4"/>
</dbReference>
<dbReference type="Gene3D" id="1.10.486.10">
    <property type="entry name" value="PCRA, domain 4"/>
    <property type="match status" value="1"/>
</dbReference>
<dbReference type="HAMAP" id="MF_01451">
    <property type="entry name" value="AddA"/>
    <property type="match status" value="1"/>
</dbReference>
<dbReference type="InterPro" id="IPR014152">
    <property type="entry name" value="AddA"/>
</dbReference>
<dbReference type="InterPro" id="IPR014017">
    <property type="entry name" value="DNA_helicase_UvrD-like_C"/>
</dbReference>
<dbReference type="InterPro" id="IPR000212">
    <property type="entry name" value="DNA_helicase_UvrD/REP"/>
</dbReference>
<dbReference type="InterPro" id="IPR027417">
    <property type="entry name" value="P-loop_NTPase"/>
</dbReference>
<dbReference type="InterPro" id="IPR011604">
    <property type="entry name" value="PDDEXK-like_dom_sf"/>
</dbReference>
<dbReference type="InterPro" id="IPR038726">
    <property type="entry name" value="PDDEXK_AddAB-type"/>
</dbReference>
<dbReference type="InterPro" id="IPR011335">
    <property type="entry name" value="Restrct_endonuc-II-like"/>
</dbReference>
<dbReference type="InterPro" id="IPR014016">
    <property type="entry name" value="UvrD-like_ATP-bd"/>
</dbReference>
<dbReference type="NCBIfam" id="TIGR02785">
    <property type="entry name" value="addA_Gpos"/>
    <property type="match status" value="1"/>
</dbReference>
<dbReference type="PANTHER" id="PTHR11070:SF48">
    <property type="entry name" value="ATP-DEPENDENT HELICASE_NUCLEASE SUBUNIT A"/>
    <property type="match status" value="1"/>
</dbReference>
<dbReference type="PANTHER" id="PTHR11070">
    <property type="entry name" value="UVRD / RECB / PCRA DNA HELICASE FAMILY MEMBER"/>
    <property type="match status" value="1"/>
</dbReference>
<dbReference type="Pfam" id="PF12705">
    <property type="entry name" value="PDDEXK_1"/>
    <property type="match status" value="1"/>
</dbReference>
<dbReference type="Pfam" id="PF00580">
    <property type="entry name" value="UvrD-helicase"/>
    <property type="match status" value="1"/>
</dbReference>
<dbReference type="Pfam" id="PF13361">
    <property type="entry name" value="UvrD_C"/>
    <property type="match status" value="1"/>
</dbReference>
<dbReference type="SUPFAM" id="SSF52540">
    <property type="entry name" value="P-loop containing nucleoside triphosphate hydrolases"/>
    <property type="match status" value="1"/>
</dbReference>
<dbReference type="SUPFAM" id="SSF52980">
    <property type="entry name" value="Restriction endonuclease-like"/>
    <property type="match status" value="1"/>
</dbReference>
<dbReference type="PROSITE" id="PS51198">
    <property type="entry name" value="UVRD_HELICASE_ATP_BIND"/>
    <property type="match status" value="1"/>
</dbReference>
<dbReference type="PROSITE" id="PS51217">
    <property type="entry name" value="UVRD_HELICASE_CTER"/>
    <property type="match status" value="1"/>
</dbReference>
<protein>
    <recommendedName>
        <fullName evidence="1">ATP-dependent helicase/nuclease subunit A</fullName>
        <ecNumber evidence="1">3.1.-.-</ecNumber>
        <ecNumber evidence="1">5.6.2.4</ecNumber>
    </recommendedName>
    <alternativeName>
        <fullName evidence="1">ATP-dependent helicase/nuclease AddA</fullName>
    </alternativeName>
    <alternativeName>
        <fullName evidence="1">DNA 3'-5' helicase AddA</fullName>
    </alternativeName>
</protein>
<proteinExistence type="inferred from homology"/>